<protein>
    <recommendedName>
        <fullName evidence="1">Adenylosuccinate synthetase</fullName>
        <shortName evidence="1">AMPSase</shortName>
        <shortName evidence="1">AdSS</shortName>
        <ecNumber evidence="1">6.3.4.4</ecNumber>
    </recommendedName>
    <alternativeName>
        <fullName evidence="1">IMP--aspartate ligase</fullName>
    </alternativeName>
</protein>
<comment type="function">
    <text evidence="1">Plays an important role in the de novo pathway of purine nucleotide biosynthesis. Catalyzes the first committed step in the biosynthesis of AMP from IMP.</text>
</comment>
<comment type="catalytic activity">
    <reaction evidence="1">
        <text>IMP + L-aspartate + GTP = N(6)-(1,2-dicarboxyethyl)-AMP + GDP + phosphate + 2 H(+)</text>
        <dbReference type="Rhea" id="RHEA:15753"/>
        <dbReference type="ChEBI" id="CHEBI:15378"/>
        <dbReference type="ChEBI" id="CHEBI:29991"/>
        <dbReference type="ChEBI" id="CHEBI:37565"/>
        <dbReference type="ChEBI" id="CHEBI:43474"/>
        <dbReference type="ChEBI" id="CHEBI:57567"/>
        <dbReference type="ChEBI" id="CHEBI:58053"/>
        <dbReference type="ChEBI" id="CHEBI:58189"/>
        <dbReference type="EC" id="6.3.4.4"/>
    </reaction>
</comment>
<comment type="cofactor">
    <cofactor evidence="1">
        <name>Mg(2+)</name>
        <dbReference type="ChEBI" id="CHEBI:18420"/>
    </cofactor>
    <text evidence="1">Binds 1 Mg(2+) ion per subunit.</text>
</comment>
<comment type="pathway">
    <text evidence="1">Purine metabolism; AMP biosynthesis via de novo pathway; AMP from IMP: step 1/2.</text>
</comment>
<comment type="subunit">
    <text evidence="1">Homodimer.</text>
</comment>
<comment type="subcellular location">
    <subcellularLocation>
        <location evidence="1">Cytoplasm</location>
    </subcellularLocation>
</comment>
<comment type="similarity">
    <text evidence="1">Belongs to the adenylosuccinate synthetase family.</text>
</comment>
<feature type="chain" id="PRO_1000089340" description="Adenylosuccinate synthetase">
    <location>
        <begin position="1"/>
        <end position="431"/>
    </location>
</feature>
<feature type="active site" description="Proton acceptor" evidence="1">
    <location>
        <position position="14"/>
    </location>
</feature>
<feature type="active site" description="Proton donor" evidence="1">
    <location>
        <position position="42"/>
    </location>
</feature>
<feature type="binding site" evidence="1">
    <location>
        <begin position="13"/>
        <end position="19"/>
    </location>
    <ligand>
        <name>GTP</name>
        <dbReference type="ChEBI" id="CHEBI:37565"/>
    </ligand>
</feature>
<feature type="binding site" description="in other chain" evidence="1">
    <location>
        <begin position="14"/>
        <end position="17"/>
    </location>
    <ligand>
        <name>IMP</name>
        <dbReference type="ChEBI" id="CHEBI:58053"/>
        <note>ligand shared between dimeric partners</note>
    </ligand>
</feature>
<feature type="binding site" evidence="1">
    <location>
        <position position="14"/>
    </location>
    <ligand>
        <name>Mg(2+)</name>
        <dbReference type="ChEBI" id="CHEBI:18420"/>
    </ligand>
</feature>
<feature type="binding site" description="in other chain" evidence="1">
    <location>
        <begin position="39"/>
        <end position="42"/>
    </location>
    <ligand>
        <name>IMP</name>
        <dbReference type="ChEBI" id="CHEBI:58053"/>
        <note>ligand shared between dimeric partners</note>
    </ligand>
</feature>
<feature type="binding site" evidence="1">
    <location>
        <begin position="41"/>
        <end position="43"/>
    </location>
    <ligand>
        <name>GTP</name>
        <dbReference type="ChEBI" id="CHEBI:37565"/>
    </ligand>
</feature>
<feature type="binding site" evidence="1">
    <location>
        <position position="41"/>
    </location>
    <ligand>
        <name>Mg(2+)</name>
        <dbReference type="ChEBI" id="CHEBI:18420"/>
    </ligand>
</feature>
<feature type="binding site" description="in other chain" evidence="1">
    <location>
        <position position="130"/>
    </location>
    <ligand>
        <name>IMP</name>
        <dbReference type="ChEBI" id="CHEBI:58053"/>
        <note>ligand shared between dimeric partners</note>
    </ligand>
</feature>
<feature type="binding site" evidence="1">
    <location>
        <position position="144"/>
    </location>
    <ligand>
        <name>IMP</name>
        <dbReference type="ChEBI" id="CHEBI:58053"/>
        <note>ligand shared between dimeric partners</note>
    </ligand>
</feature>
<feature type="binding site" description="in other chain" evidence="1">
    <location>
        <position position="225"/>
    </location>
    <ligand>
        <name>IMP</name>
        <dbReference type="ChEBI" id="CHEBI:58053"/>
        <note>ligand shared between dimeric partners</note>
    </ligand>
</feature>
<feature type="binding site" description="in other chain" evidence="1">
    <location>
        <position position="240"/>
    </location>
    <ligand>
        <name>IMP</name>
        <dbReference type="ChEBI" id="CHEBI:58053"/>
        <note>ligand shared between dimeric partners</note>
    </ligand>
</feature>
<feature type="binding site" evidence="1">
    <location>
        <begin position="300"/>
        <end position="306"/>
    </location>
    <ligand>
        <name>substrate</name>
    </ligand>
</feature>
<feature type="binding site" description="in other chain" evidence="1">
    <location>
        <position position="304"/>
    </location>
    <ligand>
        <name>IMP</name>
        <dbReference type="ChEBI" id="CHEBI:58053"/>
        <note>ligand shared between dimeric partners</note>
    </ligand>
</feature>
<feature type="binding site" evidence="1">
    <location>
        <position position="306"/>
    </location>
    <ligand>
        <name>GTP</name>
        <dbReference type="ChEBI" id="CHEBI:37565"/>
    </ligand>
</feature>
<feature type="binding site" evidence="1">
    <location>
        <begin position="332"/>
        <end position="334"/>
    </location>
    <ligand>
        <name>GTP</name>
        <dbReference type="ChEBI" id="CHEBI:37565"/>
    </ligand>
</feature>
<feature type="binding site" evidence="1">
    <location>
        <begin position="415"/>
        <end position="417"/>
    </location>
    <ligand>
        <name>GTP</name>
        <dbReference type="ChEBI" id="CHEBI:37565"/>
    </ligand>
</feature>
<name>PURA_SHEWM</name>
<sequence>MGKNVVVLGTQWGDEGKGKIVDLLTEQSKYVVRYQGGHNAGHTLVIDGEKTVLHLIPSGILRDNVKCIIGNGVVLAPDALMTEIKMLKERGVPVEERLLISEACPLILPFHCALDIAREKARGNNAIGTTGRGIGPAYEDKVSRRGLRVGDLFDAELFAEKLKEVMAYHNFMLTEYYKCEAVDYEETLKDALAIADYLKSMCVDVTELLDQARKAGEPILFEGAQGTLLDIDHGTYPFVTSSNTTAGGVATGSGFGPRHLDYVLGIMKAYTTRVGAGPFPTELQCEIGDHLGTKGHEFGATTGRKRRPGWLDVVAMKRAVQINSISGFCLTKLDVLDGLEEVKICVGYQYPDGSVATVTPLAAEGYEQVTPVLETMPGWSENTFGATSVEQLPQAALNYIKRLEELLDTPIDIISTGPDRNETMILVNPFS</sequence>
<keyword id="KW-0963">Cytoplasm</keyword>
<keyword id="KW-0342">GTP-binding</keyword>
<keyword id="KW-0436">Ligase</keyword>
<keyword id="KW-0460">Magnesium</keyword>
<keyword id="KW-0479">Metal-binding</keyword>
<keyword id="KW-0547">Nucleotide-binding</keyword>
<keyword id="KW-0658">Purine biosynthesis</keyword>
<keyword id="KW-1185">Reference proteome</keyword>
<reference key="1">
    <citation type="submission" date="2008-02" db="EMBL/GenBank/DDBJ databases">
        <title>Complete sequence of Shewanella woodyi ATCC 51908.</title>
        <authorList>
            <consortium name="US DOE Joint Genome Institute"/>
            <person name="Copeland A."/>
            <person name="Lucas S."/>
            <person name="Lapidus A."/>
            <person name="Glavina del Rio T."/>
            <person name="Dalin E."/>
            <person name="Tice H."/>
            <person name="Bruce D."/>
            <person name="Goodwin L."/>
            <person name="Pitluck S."/>
            <person name="Sims D."/>
            <person name="Brettin T."/>
            <person name="Detter J.C."/>
            <person name="Han C."/>
            <person name="Kuske C.R."/>
            <person name="Schmutz J."/>
            <person name="Larimer F."/>
            <person name="Land M."/>
            <person name="Hauser L."/>
            <person name="Kyrpides N."/>
            <person name="Lykidis A."/>
            <person name="Zhao J.-S."/>
            <person name="Richardson P."/>
        </authorList>
    </citation>
    <scope>NUCLEOTIDE SEQUENCE [LARGE SCALE GENOMIC DNA]</scope>
    <source>
        <strain>ATCC 51908 / MS32</strain>
    </source>
</reference>
<evidence type="ECO:0000255" key="1">
    <source>
        <dbReference type="HAMAP-Rule" id="MF_00011"/>
    </source>
</evidence>
<dbReference type="EC" id="6.3.4.4" evidence="1"/>
<dbReference type="EMBL" id="CP000961">
    <property type="protein sequence ID" value="ACA88475.1"/>
    <property type="molecule type" value="Genomic_DNA"/>
</dbReference>
<dbReference type="RefSeq" id="WP_012326803.1">
    <property type="nucleotide sequence ID" value="NC_010506.1"/>
</dbReference>
<dbReference type="SMR" id="B1KIH9"/>
<dbReference type="STRING" id="392500.Swoo_4219"/>
<dbReference type="KEGG" id="swd:Swoo_4219"/>
<dbReference type="eggNOG" id="COG0104">
    <property type="taxonomic scope" value="Bacteria"/>
</dbReference>
<dbReference type="HOGENOM" id="CLU_029848_0_0_6"/>
<dbReference type="UniPathway" id="UPA00075">
    <property type="reaction ID" value="UER00335"/>
</dbReference>
<dbReference type="Proteomes" id="UP000002168">
    <property type="component" value="Chromosome"/>
</dbReference>
<dbReference type="GO" id="GO:0005737">
    <property type="term" value="C:cytoplasm"/>
    <property type="evidence" value="ECO:0007669"/>
    <property type="project" value="UniProtKB-SubCell"/>
</dbReference>
<dbReference type="GO" id="GO:0004019">
    <property type="term" value="F:adenylosuccinate synthase activity"/>
    <property type="evidence" value="ECO:0007669"/>
    <property type="project" value="UniProtKB-UniRule"/>
</dbReference>
<dbReference type="GO" id="GO:0005525">
    <property type="term" value="F:GTP binding"/>
    <property type="evidence" value="ECO:0007669"/>
    <property type="project" value="UniProtKB-UniRule"/>
</dbReference>
<dbReference type="GO" id="GO:0000287">
    <property type="term" value="F:magnesium ion binding"/>
    <property type="evidence" value="ECO:0007669"/>
    <property type="project" value="UniProtKB-UniRule"/>
</dbReference>
<dbReference type="GO" id="GO:0044208">
    <property type="term" value="P:'de novo' AMP biosynthetic process"/>
    <property type="evidence" value="ECO:0007669"/>
    <property type="project" value="UniProtKB-UniRule"/>
</dbReference>
<dbReference type="GO" id="GO:0046040">
    <property type="term" value="P:IMP metabolic process"/>
    <property type="evidence" value="ECO:0007669"/>
    <property type="project" value="TreeGrafter"/>
</dbReference>
<dbReference type="CDD" id="cd03108">
    <property type="entry name" value="AdSS"/>
    <property type="match status" value="1"/>
</dbReference>
<dbReference type="FunFam" id="1.10.300.10:FF:000001">
    <property type="entry name" value="Adenylosuccinate synthetase"/>
    <property type="match status" value="1"/>
</dbReference>
<dbReference type="FunFam" id="3.90.170.10:FF:000001">
    <property type="entry name" value="Adenylosuccinate synthetase"/>
    <property type="match status" value="1"/>
</dbReference>
<dbReference type="Gene3D" id="3.40.440.10">
    <property type="entry name" value="Adenylosuccinate Synthetase, subunit A, domain 1"/>
    <property type="match status" value="1"/>
</dbReference>
<dbReference type="Gene3D" id="1.10.300.10">
    <property type="entry name" value="Adenylosuccinate Synthetase, subunit A, domain 2"/>
    <property type="match status" value="1"/>
</dbReference>
<dbReference type="Gene3D" id="3.90.170.10">
    <property type="entry name" value="Adenylosuccinate Synthetase, subunit A, domain 3"/>
    <property type="match status" value="1"/>
</dbReference>
<dbReference type="HAMAP" id="MF_00011">
    <property type="entry name" value="Adenylosucc_synth"/>
    <property type="match status" value="1"/>
</dbReference>
<dbReference type="InterPro" id="IPR018220">
    <property type="entry name" value="Adenylosuccin_syn_GTP-bd"/>
</dbReference>
<dbReference type="InterPro" id="IPR033128">
    <property type="entry name" value="Adenylosuccin_syn_Lys_AS"/>
</dbReference>
<dbReference type="InterPro" id="IPR042109">
    <property type="entry name" value="Adenylosuccinate_synth_dom1"/>
</dbReference>
<dbReference type="InterPro" id="IPR042110">
    <property type="entry name" value="Adenylosuccinate_synth_dom2"/>
</dbReference>
<dbReference type="InterPro" id="IPR042111">
    <property type="entry name" value="Adenylosuccinate_synth_dom3"/>
</dbReference>
<dbReference type="InterPro" id="IPR001114">
    <property type="entry name" value="Adenylosuccinate_synthetase"/>
</dbReference>
<dbReference type="InterPro" id="IPR027417">
    <property type="entry name" value="P-loop_NTPase"/>
</dbReference>
<dbReference type="NCBIfam" id="NF002223">
    <property type="entry name" value="PRK01117.1"/>
    <property type="match status" value="1"/>
</dbReference>
<dbReference type="NCBIfam" id="TIGR00184">
    <property type="entry name" value="purA"/>
    <property type="match status" value="1"/>
</dbReference>
<dbReference type="PANTHER" id="PTHR11846">
    <property type="entry name" value="ADENYLOSUCCINATE SYNTHETASE"/>
    <property type="match status" value="1"/>
</dbReference>
<dbReference type="PANTHER" id="PTHR11846:SF0">
    <property type="entry name" value="ADENYLOSUCCINATE SYNTHETASE"/>
    <property type="match status" value="1"/>
</dbReference>
<dbReference type="Pfam" id="PF00709">
    <property type="entry name" value="Adenylsucc_synt"/>
    <property type="match status" value="1"/>
</dbReference>
<dbReference type="SMART" id="SM00788">
    <property type="entry name" value="Adenylsucc_synt"/>
    <property type="match status" value="1"/>
</dbReference>
<dbReference type="SUPFAM" id="SSF52540">
    <property type="entry name" value="P-loop containing nucleoside triphosphate hydrolases"/>
    <property type="match status" value="1"/>
</dbReference>
<dbReference type="PROSITE" id="PS01266">
    <property type="entry name" value="ADENYLOSUCCIN_SYN_1"/>
    <property type="match status" value="1"/>
</dbReference>
<dbReference type="PROSITE" id="PS00513">
    <property type="entry name" value="ADENYLOSUCCIN_SYN_2"/>
    <property type="match status" value="1"/>
</dbReference>
<accession>B1KIH9</accession>
<organism>
    <name type="scientific">Shewanella woodyi (strain ATCC 51908 / MS32)</name>
    <dbReference type="NCBI Taxonomy" id="392500"/>
    <lineage>
        <taxon>Bacteria</taxon>
        <taxon>Pseudomonadati</taxon>
        <taxon>Pseudomonadota</taxon>
        <taxon>Gammaproteobacteria</taxon>
        <taxon>Alteromonadales</taxon>
        <taxon>Shewanellaceae</taxon>
        <taxon>Shewanella</taxon>
    </lineage>
</organism>
<proteinExistence type="inferred from homology"/>
<gene>
    <name evidence="1" type="primary">purA</name>
    <name type="ordered locus">Swoo_4219</name>
</gene>